<gene>
    <name type="primary">hoxR</name>
</gene>
<organism>
    <name type="scientific">Azotobacter vinelandii</name>
    <dbReference type="NCBI Taxonomy" id="354"/>
    <lineage>
        <taxon>Bacteria</taxon>
        <taxon>Pseudomonadati</taxon>
        <taxon>Pseudomonadota</taxon>
        <taxon>Gammaproteobacteria</taxon>
        <taxon>Pseudomonadales</taxon>
        <taxon>Pseudomonadaceae</taxon>
        <taxon>Azotobacter</taxon>
    </lineage>
</organism>
<reference key="1">
    <citation type="journal article" date="1992" name="Biochim. Biophys. Acta">
        <title>Two open reading frames (ORFs) identified near the hydrogenase structural genes in Azotobacter vinelandii, the first ORF may encode for a polypeptide similar to rubredoxins.</title>
        <authorList>
            <person name="Chen J.C."/>
            <person name="Mortenson L.E."/>
        </authorList>
    </citation>
    <scope>NUCLEOTIDE SEQUENCE [GENOMIC DNA]</scope>
    <source>
        <strain>ATCC 13705 / OP1 / DSM 366 / NCIMB 11614 / LMG 3878 / UW</strain>
    </source>
</reference>
<reference key="2">
    <citation type="journal article" date="1992" name="J. Bacteriol.">
        <title>Nucleotide sequences and genetic analysis of hydrogen oxidation (hox) genes in Azotobacter vinelandii.</title>
        <authorList>
            <person name="Menon A."/>
            <person name="Mortenson L.E."/>
            <person name="Robson R.L."/>
        </authorList>
    </citation>
    <scope>NUCLEOTIDE SEQUENCE [GENOMIC DNA]</scope>
    <source>
        <strain>ATCC 13705 / OP1 / DSM 366 / NCIMB 11614 / LMG 3878 / UW</strain>
    </source>
</reference>
<accession>P30778</accession>
<dbReference type="EMBL" id="M80522">
    <property type="protein sequence ID" value="AAA22130.1"/>
    <property type="molecule type" value="Genomic_DNA"/>
</dbReference>
<dbReference type="EMBL" id="X63778">
    <property type="protein sequence ID" value="CAA45311.1"/>
    <property type="molecule type" value="Genomic_DNA"/>
</dbReference>
<dbReference type="EMBL" id="L23970">
    <property type="protein sequence ID" value="AAA19505.1"/>
    <property type="molecule type" value="Unassigned_DNA"/>
</dbReference>
<dbReference type="PIR" id="S22223">
    <property type="entry name" value="E44915"/>
</dbReference>
<dbReference type="RefSeq" id="WP_012703493.1">
    <property type="nucleotide sequence ID" value="NZ_FPKM01000029.1"/>
</dbReference>
<dbReference type="SMR" id="P30778"/>
<dbReference type="OMA" id="LECGICW"/>
<dbReference type="GO" id="GO:0009055">
    <property type="term" value="F:electron transfer activity"/>
    <property type="evidence" value="ECO:0007669"/>
    <property type="project" value="TreeGrafter"/>
</dbReference>
<dbReference type="GO" id="GO:0005506">
    <property type="term" value="F:iron ion binding"/>
    <property type="evidence" value="ECO:0007669"/>
    <property type="project" value="InterPro"/>
</dbReference>
<dbReference type="GO" id="GO:0043448">
    <property type="term" value="P:alkane catabolic process"/>
    <property type="evidence" value="ECO:0007669"/>
    <property type="project" value="TreeGrafter"/>
</dbReference>
<dbReference type="CDD" id="cd00730">
    <property type="entry name" value="rubredoxin"/>
    <property type="match status" value="1"/>
</dbReference>
<dbReference type="Gene3D" id="2.20.28.10">
    <property type="match status" value="1"/>
</dbReference>
<dbReference type="InterPro" id="IPR024934">
    <property type="entry name" value="Rubredoxin-like_dom"/>
</dbReference>
<dbReference type="InterPro" id="IPR024935">
    <property type="entry name" value="Rubredoxin_dom"/>
</dbReference>
<dbReference type="InterPro" id="IPR050526">
    <property type="entry name" value="Rubredoxin_ET"/>
</dbReference>
<dbReference type="InterPro" id="IPR018527">
    <property type="entry name" value="Rubredoxin_Fe_BS"/>
</dbReference>
<dbReference type="PANTHER" id="PTHR47627">
    <property type="entry name" value="RUBREDOXIN"/>
    <property type="match status" value="1"/>
</dbReference>
<dbReference type="PANTHER" id="PTHR47627:SF1">
    <property type="entry name" value="RUBREDOXIN-1-RELATED"/>
    <property type="match status" value="1"/>
</dbReference>
<dbReference type="Pfam" id="PF00301">
    <property type="entry name" value="Rubredoxin"/>
    <property type="match status" value="1"/>
</dbReference>
<dbReference type="PRINTS" id="PR00163">
    <property type="entry name" value="RUBREDOXIN"/>
</dbReference>
<dbReference type="SUPFAM" id="SSF57802">
    <property type="entry name" value="Rubredoxin-like"/>
    <property type="match status" value="1"/>
</dbReference>
<dbReference type="PROSITE" id="PS00202">
    <property type="entry name" value="RUBREDOXIN"/>
    <property type="match status" value="1"/>
</dbReference>
<dbReference type="PROSITE" id="PS50903">
    <property type="entry name" value="RUBREDOXIN_LIKE"/>
    <property type="match status" value="1"/>
</dbReference>
<protein>
    <recommendedName>
        <fullName>Rubredoxin</fullName>
        <shortName>Rd</shortName>
    </recommendedName>
</protein>
<proteinExistence type="inferred from homology"/>
<sequence length="72" mass="8086">MSARFEGSYLGDATRLADDAVLECKICWQRYDPAEGDPVWQIPPGTPFAALPAHWRCPRCDGDREQFMVVDG</sequence>
<keyword id="KW-0249">Electron transport</keyword>
<keyword id="KW-0408">Iron</keyword>
<keyword id="KW-0479">Metal-binding</keyword>
<keyword id="KW-0813">Transport</keyword>
<name>RUBR_AZOVI</name>
<evidence type="ECO:0000250" key="1"/>
<evidence type="ECO:0000255" key="2">
    <source>
        <dbReference type="PROSITE-ProRule" id="PRU00241"/>
    </source>
</evidence>
<evidence type="ECO:0000305" key="3"/>
<feature type="chain" id="PRO_0000135023" description="Rubredoxin">
    <location>
        <begin position="1"/>
        <end position="72"/>
    </location>
</feature>
<feature type="domain" description="Rubredoxin-like" evidence="2">
    <location>
        <begin position="19"/>
        <end position="72"/>
    </location>
</feature>
<feature type="binding site" evidence="2">
    <location>
        <position position="24"/>
    </location>
    <ligand>
        <name>Fe cation</name>
        <dbReference type="ChEBI" id="CHEBI:24875"/>
    </ligand>
</feature>
<feature type="binding site" evidence="2">
    <location>
        <position position="27"/>
    </location>
    <ligand>
        <name>Fe cation</name>
        <dbReference type="ChEBI" id="CHEBI:24875"/>
    </ligand>
</feature>
<feature type="binding site" evidence="2">
    <location>
        <position position="57"/>
    </location>
    <ligand>
        <name>Fe cation</name>
        <dbReference type="ChEBI" id="CHEBI:24875"/>
    </ligand>
</feature>
<feature type="binding site" evidence="2">
    <location>
        <position position="60"/>
    </location>
    <ligand>
        <name>Fe cation</name>
        <dbReference type="ChEBI" id="CHEBI:24875"/>
    </ligand>
</feature>
<comment type="function">
    <text>Rubredoxin is a small nonheme, iron protein lacking acid-labile sulfide. Its single Fe, chelated to 4 Cys, functions as an electron acceptor and may also stabilize the conformation of the molecule. Could be involved in hydrogenase-linked redox processes.</text>
</comment>
<comment type="cofactor">
    <cofactor evidence="1">
        <name>Fe(3+)</name>
        <dbReference type="ChEBI" id="CHEBI:29034"/>
    </cofactor>
    <text evidence="1">Binds 1 Fe(3+) ion per subunit.</text>
</comment>
<comment type="similarity">
    <text evidence="3">Belongs to the rubredoxin family.</text>
</comment>